<gene>
    <name evidence="1" type="primary">tatA</name>
    <name type="ordered locus">SYNAS_22550</name>
    <name type="ORF">SYN_00926</name>
</gene>
<dbReference type="EMBL" id="CP000252">
    <property type="protein sequence ID" value="ABC78134.1"/>
    <property type="molecule type" value="Genomic_DNA"/>
</dbReference>
<dbReference type="RefSeq" id="WP_011418154.1">
    <property type="nucleotide sequence ID" value="NC_007759.1"/>
</dbReference>
<dbReference type="SMR" id="Q2LVM4"/>
<dbReference type="FunCoup" id="Q2LVM4">
    <property type="interactions" value="471"/>
</dbReference>
<dbReference type="STRING" id="56780.SYN_00926"/>
<dbReference type="KEGG" id="sat:SYN_00926"/>
<dbReference type="eggNOG" id="COG1826">
    <property type="taxonomic scope" value="Bacteria"/>
</dbReference>
<dbReference type="HOGENOM" id="CLU_086034_6_1_7"/>
<dbReference type="InParanoid" id="Q2LVM4"/>
<dbReference type="OrthoDB" id="9813726at2"/>
<dbReference type="Proteomes" id="UP000001933">
    <property type="component" value="Chromosome"/>
</dbReference>
<dbReference type="GO" id="GO:0033281">
    <property type="term" value="C:TAT protein transport complex"/>
    <property type="evidence" value="ECO:0007669"/>
    <property type="project" value="UniProtKB-UniRule"/>
</dbReference>
<dbReference type="GO" id="GO:0008320">
    <property type="term" value="F:protein transmembrane transporter activity"/>
    <property type="evidence" value="ECO:0007669"/>
    <property type="project" value="UniProtKB-UniRule"/>
</dbReference>
<dbReference type="GO" id="GO:0043953">
    <property type="term" value="P:protein transport by the Tat complex"/>
    <property type="evidence" value="ECO:0007669"/>
    <property type="project" value="UniProtKB-UniRule"/>
</dbReference>
<dbReference type="Gene3D" id="1.20.5.3310">
    <property type="match status" value="1"/>
</dbReference>
<dbReference type="HAMAP" id="MF_00236">
    <property type="entry name" value="TatA_E"/>
    <property type="match status" value="1"/>
</dbReference>
<dbReference type="InterPro" id="IPR003369">
    <property type="entry name" value="TatA/B/E"/>
</dbReference>
<dbReference type="InterPro" id="IPR006312">
    <property type="entry name" value="TatA/E"/>
</dbReference>
<dbReference type="NCBIfam" id="NF011430">
    <property type="entry name" value="PRK14861.1"/>
    <property type="match status" value="1"/>
</dbReference>
<dbReference type="NCBIfam" id="TIGR01411">
    <property type="entry name" value="tatAE"/>
    <property type="match status" value="1"/>
</dbReference>
<dbReference type="PANTHER" id="PTHR42982">
    <property type="entry name" value="SEC-INDEPENDENT PROTEIN TRANSLOCASE PROTEIN TATA"/>
    <property type="match status" value="1"/>
</dbReference>
<dbReference type="PANTHER" id="PTHR42982:SF1">
    <property type="entry name" value="SEC-INDEPENDENT PROTEIN TRANSLOCASE PROTEIN TATA"/>
    <property type="match status" value="1"/>
</dbReference>
<dbReference type="Pfam" id="PF02416">
    <property type="entry name" value="TatA_B_E"/>
    <property type="match status" value="1"/>
</dbReference>
<dbReference type="PRINTS" id="PR01506">
    <property type="entry name" value="TATBPROTEIN"/>
</dbReference>
<proteinExistence type="inferred from homology"/>
<feature type="chain" id="PRO_1000044453" description="Sec-independent protein translocase protein TatA">
    <location>
        <begin position="1"/>
        <end position="61"/>
    </location>
</feature>
<feature type="transmembrane region" description="Helical" evidence="1">
    <location>
        <begin position="1"/>
        <end position="21"/>
    </location>
</feature>
<evidence type="ECO:0000255" key="1">
    <source>
        <dbReference type="HAMAP-Rule" id="MF_00236"/>
    </source>
</evidence>
<comment type="function">
    <text evidence="1">Part of the twin-arginine translocation (Tat) system that transports large folded proteins containing a characteristic twin-arginine motif in their signal peptide across membranes. TatA could form the protein-conducting channel of the Tat system.</text>
</comment>
<comment type="subunit">
    <text evidence="1">The Tat system comprises two distinct complexes: a TatABC complex, containing multiple copies of TatA, TatB and TatC subunits, and a separate TatA complex, containing only TatA subunits. Substrates initially bind to the TatABC complex, which probably triggers association of the separate TatA complex to form the active translocon.</text>
</comment>
<comment type="subcellular location">
    <subcellularLocation>
        <location evidence="1">Cell inner membrane</location>
        <topology evidence="1">Single-pass membrane protein</topology>
    </subcellularLocation>
</comment>
<comment type="similarity">
    <text evidence="1">Belongs to the TatA/E family.</text>
</comment>
<sequence length="61" mass="6625">MFGIGMPEMLIILVIILIIFGAGKLPEIGGAIGKGIKNFKKASNESEEIDENSRPKKIEPK</sequence>
<keyword id="KW-0997">Cell inner membrane</keyword>
<keyword id="KW-1003">Cell membrane</keyword>
<keyword id="KW-0472">Membrane</keyword>
<keyword id="KW-0653">Protein transport</keyword>
<keyword id="KW-1185">Reference proteome</keyword>
<keyword id="KW-0811">Translocation</keyword>
<keyword id="KW-0812">Transmembrane</keyword>
<keyword id="KW-1133">Transmembrane helix</keyword>
<keyword id="KW-0813">Transport</keyword>
<accession>Q2LVM4</accession>
<protein>
    <recommendedName>
        <fullName evidence="1">Sec-independent protein translocase protein TatA</fullName>
    </recommendedName>
</protein>
<name>TATA_SYNAS</name>
<organism>
    <name type="scientific">Syntrophus aciditrophicus (strain SB)</name>
    <dbReference type="NCBI Taxonomy" id="56780"/>
    <lineage>
        <taxon>Bacteria</taxon>
        <taxon>Pseudomonadati</taxon>
        <taxon>Thermodesulfobacteriota</taxon>
        <taxon>Syntrophia</taxon>
        <taxon>Syntrophales</taxon>
        <taxon>Syntrophaceae</taxon>
        <taxon>Syntrophus</taxon>
    </lineage>
</organism>
<reference key="1">
    <citation type="journal article" date="2007" name="Proc. Natl. Acad. Sci. U.S.A.">
        <title>The genome of Syntrophus aciditrophicus: life at the thermodynamic limit of microbial growth.</title>
        <authorList>
            <person name="McInerney M.J."/>
            <person name="Rohlin L."/>
            <person name="Mouttaki H."/>
            <person name="Kim U."/>
            <person name="Krupp R.S."/>
            <person name="Rios-Hernandez L."/>
            <person name="Sieber J."/>
            <person name="Struchtemeyer C.G."/>
            <person name="Bhattacharyya A."/>
            <person name="Campbell J.W."/>
            <person name="Gunsalus R.P."/>
        </authorList>
    </citation>
    <scope>NUCLEOTIDE SEQUENCE [LARGE SCALE GENOMIC DNA]</scope>
    <source>
        <strain>SB</strain>
    </source>
</reference>